<reference key="1">
    <citation type="journal article" date="2005" name="J. Bacteriol.">
        <title>Insights on evolution of virulence and resistance from the complete genome analysis of an early methicillin-resistant Staphylococcus aureus strain and a biofilm-producing methicillin-resistant Staphylococcus epidermidis strain.</title>
        <authorList>
            <person name="Gill S.R."/>
            <person name="Fouts D.E."/>
            <person name="Archer G.L."/>
            <person name="Mongodin E.F."/>
            <person name="DeBoy R.T."/>
            <person name="Ravel J."/>
            <person name="Paulsen I.T."/>
            <person name="Kolonay J.F."/>
            <person name="Brinkac L.M."/>
            <person name="Beanan M.J."/>
            <person name="Dodson R.J."/>
            <person name="Daugherty S.C."/>
            <person name="Madupu R."/>
            <person name="Angiuoli S.V."/>
            <person name="Durkin A.S."/>
            <person name="Haft D.H."/>
            <person name="Vamathevan J.J."/>
            <person name="Khouri H."/>
            <person name="Utterback T.R."/>
            <person name="Lee C."/>
            <person name="Dimitrov G."/>
            <person name="Jiang L."/>
            <person name="Qin H."/>
            <person name="Weidman J."/>
            <person name="Tran K."/>
            <person name="Kang K.H."/>
            <person name="Hance I.R."/>
            <person name="Nelson K.E."/>
            <person name="Fraser C.M."/>
        </authorList>
    </citation>
    <scope>NUCLEOTIDE SEQUENCE [LARGE SCALE GENOMIC DNA]</scope>
    <source>
        <strain>COL</strain>
    </source>
</reference>
<sequence length="291" mass="32284">MFIIELIKGIILGVVEGLTEFAPVSSTGHMILVDDMWLKSSEFLGSQSAFTFKIVIQLGSVFAAAWVFRERFLEILHIGKHKHVEGDNDQQRRSKPRRLNLLHVLVGMVPAGILGLLFDDFIEEHLFSVPTVMIGLFVGAIYMIIADKYSAKVKNPQTVDQISYFQAFVIGISQAVAMWPGFSRSGSTISTGVLMKLNHKAASDFTFIMAVPIMLAASGLSLLKHYQDIQIADIPFYILGFLAAFTVGLIAIKTFLHQINKIKLIPFAIYRIVLVIFIAILYFGFGIGKGI</sequence>
<gene>
    <name evidence="1" type="primary">uppP</name>
    <name type="synonym">bacA</name>
    <name type="ordered locus">SACOL0743</name>
</gene>
<organism>
    <name type="scientific">Staphylococcus aureus (strain COL)</name>
    <dbReference type="NCBI Taxonomy" id="93062"/>
    <lineage>
        <taxon>Bacteria</taxon>
        <taxon>Bacillati</taxon>
        <taxon>Bacillota</taxon>
        <taxon>Bacilli</taxon>
        <taxon>Bacillales</taxon>
        <taxon>Staphylococcaceae</taxon>
        <taxon>Staphylococcus</taxon>
    </lineage>
</organism>
<keyword id="KW-0046">Antibiotic resistance</keyword>
<keyword id="KW-1003">Cell membrane</keyword>
<keyword id="KW-0133">Cell shape</keyword>
<keyword id="KW-0961">Cell wall biogenesis/degradation</keyword>
<keyword id="KW-0378">Hydrolase</keyword>
<keyword id="KW-0472">Membrane</keyword>
<keyword id="KW-0573">Peptidoglycan synthesis</keyword>
<keyword id="KW-0812">Transmembrane</keyword>
<keyword id="KW-1133">Transmembrane helix</keyword>
<name>UPPP_STAAC</name>
<comment type="function">
    <text evidence="1">Catalyzes the dephosphorylation of undecaprenyl diphosphate (UPP). Confers resistance to bacitracin.</text>
</comment>
<comment type="catalytic activity">
    <reaction evidence="1">
        <text>di-trans,octa-cis-undecaprenyl diphosphate + H2O = di-trans,octa-cis-undecaprenyl phosphate + phosphate + H(+)</text>
        <dbReference type="Rhea" id="RHEA:28094"/>
        <dbReference type="ChEBI" id="CHEBI:15377"/>
        <dbReference type="ChEBI" id="CHEBI:15378"/>
        <dbReference type="ChEBI" id="CHEBI:43474"/>
        <dbReference type="ChEBI" id="CHEBI:58405"/>
        <dbReference type="ChEBI" id="CHEBI:60392"/>
        <dbReference type="EC" id="3.6.1.27"/>
    </reaction>
</comment>
<comment type="subcellular location">
    <subcellularLocation>
        <location evidence="1">Cell membrane</location>
        <topology evidence="1">Multi-pass membrane protein</topology>
    </subcellularLocation>
</comment>
<comment type="miscellaneous">
    <text>Bacitracin is thought to be involved in the inhibition of peptidoglycan synthesis by sequestering undecaprenyl diphosphate, thereby reducing the pool of lipid carrier available.</text>
</comment>
<comment type="similarity">
    <text evidence="1">Belongs to the UppP family.</text>
</comment>
<feature type="chain" id="PRO_0000151198" description="Undecaprenyl-diphosphatase">
    <location>
        <begin position="1"/>
        <end position="291"/>
    </location>
</feature>
<feature type="transmembrane region" description="Helical" evidence="1">
    <location>
        <begin position="1"/>
        <end position="21"/>
    </location>
</feature>
<feature type="transmembrane region" description="Helical" evidence="1">
    <location>
        <begin position="48"/>
        <end position="68"/>
    </location>
</feature>
<feature type="transmembrane region" description="Helical" evidence="1">
    <location>
        <begin position="102"/>
        <end position="122"/>
    </location>
</feature>
<feature type="transmembrane region" description="Helical" evidence="1">
    <location>
        <begin position="126"/>
        <end position="146"/>
    </location>
</feature>
<feature type="transmembrane region" description="Helical" evidence="1">
    <location>
        <begin position="162"/>
        <end position="182"/>
    </location>
</feature>
<feature type="transmembrane region" description="Helical" evidence="1">
    <location>
        <begin position="203"/>
        <end position="223"/>
    </location>
</feature>
<feature type="transmembrane region" description="Helical" evidence="1">
    <location>
        <begin position="231"/>
        <end position="251"/>
    </location>
</feature>
<feature type="transmembrane region" description="Helical" evidence="1">
    <location>
        <begin position="267"/>
        <end position="287"/>
    </location>
</feature>
<accession>Q5HHY5</accession>
<protein>
    <recommendedName>
        <fullName evidence="1">Undecaprenyl-diphosphatase</fullName>
        <ecNumber evidence="1">3.6.1.27</ecNumber>
    </recommendedName>
    <alternativeName>
        <fullName evidence="1">Bacitracin resistance protein</fullName>
    </alternativeName>
    <alternativeName>
        <fullName evidence="1">Undecaprenyl pyrophosphate phosphatase</fullName>
    </alternativeName>
</protein>
<evidence type="ECO:0000255" key="1">
    <source>
        <dbReference type="HAMAP-Rule" id="MF_01006"/>
    </source>
</evidence>
<proteinExistence type="inferred from homology"/>
<dbReference type="EC" id="3.6.1.27" evidence="1"/>
<dbReference type="EMBL" id="CP000046">
    <property type="protein sequence ID" value="AAW37804.1"/>
    <property type="molecule type" value="Genomic_DNA"/>
</dbReference>
<dbReference type="RefSeq" id="WP_000469891.1">
    <property type="nucleotide sequence ID" value="NC_002951.2"/>
</dbReference>
<dbReference type="SMR" id="Q5HHY5"/>
<dbReference type="KEGG" id="sac:SACOL0743"/>
<dbReference type="HOGENOM" id="CLU_060296_2_0_9"/>
<dbReference type="Proteomes" id="UP000000530">
    <property type="component" value="Chromosome"/>
</dbReference>
<dbReference type="GO" id="GO:0005886">
    <property type="term" value="C:plasma membrane"/>
    <property type="evidence" value="ECO:0007669"/>
    <property type="project" value="UniProtKB-SubCell"/>
</dbReference>
<dbReference type="GO" id="GO:0050380">
    <property type="term" value="F:undecaprenyl-diphosphatase activity"/>
    <property type="evidence" value="ECO:0007669"/>
    <property type="project" value="UniProtKB-UniRule"/>
</dbReference>
<dbReference type="GO" id="GO:0071555">
    <property type="term" value="P:cell wall organization"/>
    <property type="evidence" value="ECO:0007669"/>
    <property type="project" value="UniProtKB-KW"/>
</dbReference>
<dbReference type="GO" id="GO:0009252">
    <property type="term" value="P:peptidoglycan biosynthetic process"/>
    <property type="evidence" value="ECO:0007669"/>
    <property type="project" value="UniProtKB-KW"/>
</dbReference>
<dbReference type="GO" id="GO:0008360">
    <property type="term" value="P:regulation of cell shape"/>
    <property type="evidence" value="ECO:0007669"/>
    <property type="project" value="UniProtKB-KW"/>
</dbReference>
<dbReference type="GO" id="GO:0046677">
    <property type="term" value="P:response to antibiotic"/>
    <property type="evidence" value="ECO:0007669"/>
    <property type="project" value="UniProtKB-UniRule"/>
</dbReference>
<dbReference type="HAMAP" id="MF_01006">
    <property type="entry name" value="Undec_diphosphatase"/>
    <property type="match status" value="1"/>
</dbReference>
<dbReference type="InterPro" id="IPR003824">
    <property type="entry name" value="UppP"/>
</dbReference>
<dbReference type="NCBIfam" id="NF001390">
    <property type="entry name" value="PRK00281.1-4"/>
    <property type="match status" value="1"/>
</dbReference>
<dbReference type="NCBIfam" id="TIGR00753">
    <property type="entry name" value="undec_PP_bacA"/>
    <property type="match status" value="1"/>
</dbReference>
<dbReference type="PANTHER" id="PTHR30622">
    <property type="entry name" value="UNDECAPRENYL-DIPHOSPHATASE"/>
    <property type="match status" value="1"/>
</dbReference>
<dbReference type="PANTHER" id="PTHR30622:SF3">
    <property type="entry name" value="UNDECAPRENYL-DIPHOSPHATASE"/>
    <property type="match status" value="1"/>
</dbReference>
<dbReference type="Pfam" id="PF02673">
    <property type="entry name" value="BacA"/>
    <property type="match status" value="1"/>
</dbReference>